<accession>F4ICB6</accession>
<accession>Q9M9T8</accession>
<sequence>MGCVNSKQTVSVTPAIDHSGVFRDNVCSGSGRIVVEDLPPVTETKLLSWWSKSGKKSSSKKSGSELGSDFGELSESGRASSNCRSESVSFRLGNLSKYLEAEQVAAGWPAWLSNVAGEAIHGWVPFRSDAFEKLEKIGQGTYSSVFRARETETGRIVALKKVRFDNFEPESVRFMAREILILRKLNHPNIIKLEGIVTSKLSCSIHLVFEYMEHDLTGLLSSPDIDFTTPQIKCYMKQLLSGLDHCHARGVMHRDIKGSNLLVNNEGILKVADFGLANFCNASGNKQPLTSRVVTLWYRPPELLLGATEYGASVDLWSVGCVFAELLIGKPVLQGRTEVEQLHKIFKLCGSPPEDYWKKSKLPHAMLFKPQQHYDGCLRETLKLKGLSDADINLIETLLSIQPHKRGTASTALVSQYFTSKPFACDPSSLPVYSPSKEIDAKHREDTTRKKISGNGRRGTESRKPTRKPPAFAKLAPAEDVRHHSQKFQKRNGHSVHNSIDSDSTLFEKMQKPSNHEKDEASHVKNASQGDVPFSGPLQVSVSSGFAWAKRRKDDICVRSHNRSLSRGHIPNLLGPSPAFSENTDVDSKNNEKEKEEKHGERTDSQDREAYEMLKLSMLKKWRQLERPDSFGGSDEYHSQELSLELYQREEKAAKLGHLGYEDNDEKIEFSGPLLSKSYGVDELLERHERQIRQLVRKSWFQKGKKQGK</sequence>
<organism>
    <name type="scientific">Arabidopsis thaliana</name>
    <name type="common">Mouse-ear cress</name>
    <dbReference type="NCBI Taxonomy" id="3702"/>
    <lineage>
        <taxon>Eukaryota</taxon>
        <taxon>Viridiplantae</taxon>
        <taxon>Streptophyta</taxon>
        <taxon>Embryophyta</taxon>
        <taxon>Tracheophyta</taxon>
        <taxon>Spermatophyta</taxon>
        <taxon>Magnoliopsida</taxon>
        <taxon>eudicotyledons</taxon>
        <taxon>Gunneridae</taxon>
        <taxon>Pentapetalae</taxon>
        <taxon>rosids</taxon>
        <taxon>malvids</taxon>
        <taxon>Brassicales</taxon>
        <taxon>Brassicaceae</taxon>
        <taxon>Camelineae</taxon>
        <taxon>Arabidopsis</taxon>
    </lineage>
</organism>
<name>IBS1_ARATH</name>
<proteinExistence type="inferred from homology"/>
<evidence type="ECO:0000255" key="1"/>
<evidence type="ECO:0000255" key="2">
    <source>
        <dbReference type="PROSITE-ProRule" id="PRU00159"/>
    </source>
</evidence>
<evidence type="ECO:0000256" key="3">
    <source>
        <dbReference type="SAM" id="MobiDB-lite"/>
    </source>
</evidence>
<evidence type="ECO:0000269" key="4">
    <source>
    </source>
</evidence>
<evidence type="ECO:0000269" key="5">
    <source>
    </source>
</evidence>
<evidence type="ECO:0000303" key="6">
    <source>
    </source>
</evidence>
<evidence type="ECO:0000312" key="7">
    <source>
        <dbReference type="Araport" id="AT1G18670"/>
    </source>
</evidence>
<evidence type="ECO:0000312" key="8">
    <source>
        <dbReference type="EMBL" id="AAF27112.1"/>
    </source>
</evidence>
<protein>
    <recommendedName>
        <fullName evidence="6">Protein IMPAIRED IN BABA-INDUCED STERILITY 1</fullName>
        <ecNumber evidence="2">2.7.11.-</ecNumber>
    </recommendedName>
</protein>
<keyword id="KW-0025">Alternative splicing</keyword>
<keyword id="KW-0067">ATP-binding</keyword>
<keyword id="KW-0418">Kinase</keyword>
<keyword id="KW-0449">Lipoprotein</keyword>
<keyword id="KW-0519">Myristate</keyword>
<keyword id="KW-0547">Nucleotide-binding</keyword>
<keyword id="KW-0611">Plant defense</keyword>
<keyword id="KW-1185">Reference proteome</keyword>
<keyword id="KW-0723">Serine/threonine-protein kinase</keyword>
<keyword id="KW-0808">Transferase</keyword>
<comment type="function">
    <text evidence="4 5">Required for beta-aminobutyric acid (BABA)-induced resistance (BABA-IR) against bacteria (e.g. P.syringae) and oomycetes (e.g. H.parasitica) via priming for salicylate (SA)-dependent defense responses such as pathogenesis-related PR-1 gene expression and trailing necrosis. Involved in BABA-mediated sterility (PubMed:15722464, PubMed:22209872). Necessary for the inheritance of BABA-priming to next generation, especially for the primed to be primed phenotype which consists in an enhanced second BABA-priming in transgenerationally primed plants (PubMed:22209872).</text>
</comment>
<comment type="alternative products">
    <event type="alternative splicing"/>
    <isoform>
        <id>F4ICB6-1</id>
        <name>1</name>
        <sequence type="displayed"/>
    </isoform>
    <isoform>
        <id>F4ICB6-2</id>
        <name>2</name>
        <sequence type="described" ref="VSP_059055 VSP_059056"/>
    </isoform>
    <text evidence="7">Additional isoforms seem to exist.</text>
</comment>
<comment type="disruption phenotype">
    <text evidence="4 5">Impaired in beta-aminobutyric acid (BABA)-induced sterility. Altered BABA-induced resistance (BABA-IR) against bacteria (e.g. P.syringae) and oomycetes (e.g. H.parasitica) associated with reduction in priming for salicylate (SA)-dependent defense responses (e.g. trailing necrosis and pathogenesis-related PR-1 gene expression) (PubMed:15722464, PubMed:22209872). Reduced primed to be primed phenotype in transgenerationally primed plants exposed to a second BABA-priming (PubMed:22209872).</text>
</comment>
<comment type="similarity">
    <text evidence="2">Belongs to the protein kinase superfamily. Ser/Thr protein kinase family.</text>
</comment>
<comment type="online information" name="Protein Spotlight">
    <link uri="https://www.proteinspotlight.org/back_issues/196/"/>
    <text>Seeking past shelter - Issue 196 of October 2017</text>
</comment>
<dbReference type="EC" id="2.7.11.-" evidence="2"/>
<dbReference type="EMBL" id="AC011809">
    <property type="protein sequence ID" value="AAF27112.1"/>
    <property type="molecule type" value="Genomic_DNA"/>
</dbReference>
<dbReference type="EMBL" id="CP002684">
    <property type="protein sequence ID" value="AEE29744.1"/>
    <property type="molecule type" value="Genomic_DNA"/>
</dbReference>
<dbReference type="EMBL" id="CP002684">
    <property type="protein sequence ID" value="ANM58799.1"/>
    <property type="molecule type" value="Genomic_DNA"/>
</dbReference>
<dbReference type="PIR" id="D86320">
    <property type="entry name" value="D86320"/>
</dbReference>
<dbReference type="RefSeq" id="NP_001321210.1">
    <molecule id="F4ICB6-2"/>
    <property type="nucleotide sequence ID" value="NM_001332357.1"/>
</dbReference>
<dbReference type="RefSeq" id="NP_173302.2">
    <molecule id="F4ICB6-1"/>
    <property type="nucleotide sequence ID" value="NM_101725.3"/>
</dbReference>
<dbReference type="SMR" id="F4ICB6"/>
<dbReference type="FunCoup" id="F4ICB6">
    <property type="interactions" value="1234"/>
</dbReference>
<dbReference type="STRING" id="3702.F4ICB6"/>
<dbReference type="GlyGen" id="F4ICB6">
    <property type="glycosylation" value="1 site"/>
</dbReference>
<dbReference type="iPTMnet" id="F4ICB6"/>
<dbReference type="PaxDb" id="3702-AT1G18670.1"/>
<dbReference type="ProteomicsDB" id="248568">
    <molecule id="F4ICB6-1"/>
</dbReference>
<dbReference type="EnsemblPlants" id="AT1G18670.1">
    <molecule id="F4ICB6-1"/>
    <property type="protein sequence ID" value="AT1G18670.1"/>
    <property type="gene ID" value="AT1G18670"/>
</dbReference>
<dbReference type="EnsemblPlants" id="AT1G18670.2">
    <molecule id="F4ICB6-2"/>
    <property type="protein sequence ID" value="AT1G18670.2"/>
    <property type="gene ID" value="AT1G18670"/>
</dbReference>
<dbReference type="GeneID" id="838448"/>
<dbReference type="Gramene" id="AT1G18670.1">
    <molecule id="F4ICB6-1"/>
    <property type="protein sequence ID" value="AT1G18670.1"/>
    <property type="gene ID" value="AT1G18670"/>
</dbReference>
<dbReference type="Gramene" id="AT1G18670.2">
    <molecule id="F4ICB6-2"/>
    <property type="protein sequence ID" value="AT1G18670.2"/>
    <property type="gene ID" value="AT1G18670"/>
</dbReference>
<dbReference type="KEGG" id="ath:AT1G18670"/>
<dbReference type="Araport" id="AT1G18670"/>
<dbReference type="TAIR" id="AT1G18670">
    <property type="gene designation" value="IBS1"/>
</dbReference>
<dbReference type="eggNOG" id="KOG0600">
    <property type="taxonomic scope" value="Eukaryota"/>
</dbReference>
<dbReference type="HOGENOM" id="CLU_000288_78_4_1"/>
<dbReference type="InParanoid" id="F4ICB6"/>
<dbReference type="OMA" id="KICGNGR"/>
<dbReference type="PRO" id="PR:F4ICB6"/>
<dbReference type="Proteomes" id="UP000006548">
    <property type="component" value="Chromosome 1"/>
</dbReference>
<dbReference type="ExpressionAtlas" id="F4ICB6">
    <property type="expression patterns" value="baseline and differential"/>
</dbReference>
<dbReference type="GO" id="GO:0005886">
    <property type="term" value="C:plasma membrane"/>
    <property type="evidence" value="ECO:0007005"/>
    <property type="project" value="TAIR"/>
</dbReference>
<dbReference type="GO" id="GO:0005524">
    <property type="term" value="F:ATP binding"/>
    <property type="evidence" value="ECO:0007669"/>
    <property type="project" value="UniProtKB-KW"/>
</dbReference>
<dbReference type="GO" id="GO:0004674">
    <property type="term" value="F:protein serine/threonine kinase activity"/>
    <property type="evidence" value="ECO:0007669"/>
    <property type="project" value="UniProtKB-KW"/>
</dbReference>
<dbReference type="GO" id="GO:0042742">
    <property type="term" value="P:defense response to bacterium"/>
    <property type="evidence" value="ECO:0000315"/>
    <property type="project" value="UniProtKB"/>
</dbReference>
<dbReference type="GO" id="GO:0002229">
    <property type="term" value="P:defense response to oomycetes"/>
    <property type="evidence" value="ECO:0000315"/>
    <property type="project" value="UniProtKB"/>
</dbReference>
<dbReference type="GO" id="GO:1900426">
    <property type="term" value="P:positive regulation of defense response to bacterium"/>
    <property type="evidence" value="ECO:0000315"/>
    <property type="project" value="UniProtKB"/>
</dbReference>
<dbReference type="GO" id="GO:1902290">
    <property type="term" value="P:positive regulation of defense response to oomycetes"/>
    <property type="evidence" value="ECO:0000315"/>
    <property type="project" value="UniProtKB"/>
</dbReference>
<dbReference type="GO" id="GO:2000031">
    <property type="term" value="P:regulation of salicylic acid mediated signaling pathway"/>
    <property type="evidence" value="ECO:0000315"/>
    <property type="project" value="UniProtKB"/>
</dbReference>
<dbReference type="CDD" id="cd07840">
    <property type="entry name" value="STKc_CDK9_like"/>
    <property type="match status" value="1"/>
</dbReference>
<dbReference type="FunFam" id="1.10.510.10:FF:000043">
    <property type="entry name" value="probable serine/threonine-protein kinase At1g54610"/>
    <property type="match status" value="1"/>
</dbReference>
<dbReference type="FunFam" id="3.30.200.20:FF:000021">
    <property type="entry name" value="probable serine/threonine-protein kinase At1g54610"/>
    <property type="match status" value="1"/>
</dbReference>
<dbReference type="Gene3D" id="3.30.200.20">
    <property type="entry name" value="Phosphorylase Kinase, domain 1"/>
    <property type="match status" value="1"/>
</dbReference>
<dbReference type="Gene3D" id="1.10.510.10">
    <property type="entry name" value="Transferase(Phosphotransferase) domain 1"/>
    <property type="match status" value="1"/>
</dbReference>
<dbReference type="InterPro" id="IPR050108">
    <property type="entry name" value="CDK"/>
</dbReference>
<dbReference type="InterPro" id="IPR011009">
    <property type="entry name" value="Kinase-like_dom_sf"/>
</dbReference>
<dbReference type="InterPro" id="IPR000719">
    <property type="entry name" value="Prot_kinase_dom"/>
</dbReference>
<dbReference type="InterPro" id="IPR017441">
    <property type="entry name" value="Protein_kinase_ATP_BS"/>
</dbReference>
<dbReference type="InterPro" id="IPR008271">
    <property type="entry name" value="Ser/Thr_kinase_AS"/>
</dbReference>
<dbReference type="PANTHER" id="PTHR24056">
    <property type="entry name" value="CELL DIVISION PROTEIN KINASE"/>
    <property type="match status" value="1"/>
</dbReference>
<dbReference type="PANTHER" id="PTHR24056:SF228">
    <property type="entry name" value="PROTEIN IMPAIRED IN BABA-INDUCED STERILITY 1"/>
    <property type="match status" value="1"/>
</dbReference>
<dbReference type="Pfam" id="PF00069">
    <property type="entry name" value="Pkinase"/>
    <property type="match status" value="1"/>
</dbReference>
<dbReference type="SMART" id="SM00220">
    <property type="entry name" value="S_TKc"/>
    <property type="match status" value="1"/>
</dbReference>
<dbReference type="SUPFAM" id="SSF56112">
    <property type="entry name" value="Protein kinase-like (PK-like)"/>
    <property type="match status" value="1"/>
</dbReference>
<dbReference type="PROSITE" id="PS00107">
    <property type="entry name" value="PROTEIN_KINASE_ATP"/>
    <property type="match status" value="1"/>
</dbReference>
<dbReference type="PROSITE" id="PS50011">
    <property type="entry name" value="PROTEIN_KINASE_DOM"/>
    <property type="match status" value="1"/>
</dbReference>
<dbReference type="PROSITE" id="PS00108">
    <property type="entry name" value="PROTEIN_KINASE_ST"/>
    <property type="match status" value="1"/>
</dbReference>
<feature type="initiator methionine" description="Removed" evidence="1">
    <location>
        <position position="1"/>
    </location>
</feature>
<feature type="chain" id="PRO_0000441251" description="Protein IMPAIRED IN BABA-INDUCED STERILITY 1">
    <location>
        <begin position="2"/>
        <end position="709"/>
    </location>
</feature>
<feature type="domain" description="Protein kinase" evidence="2">
    <location>
        <begin position="131"/>
        <end position="418"/>
    </location>
</feature>
<feature type="region of interest" description="Disordered" evidence="3">
    <location>
        <begin position="53"/>
        <end position="80"/>
    </location>
</feature>
<feature type="region of interest" description="Disordered" evidence="3">
    <location>
        <begin position="434"/>
        <end position="536"/>
    </location>
</feature>
<feature type="region of interest" description="Disordered" evidence="3">
    <location>
        <begin position="566"/>
        <end position="609"/>
    </location>
</feature>
<feature type="compositionally biased region" description="Basic and acidic residues" evidence="3">
    <location>
        <begin position="437"/>
        <end position="449"/>
    </location>
</feature>
<feature type="compositionally biased region" description="Basic residues" evidence="3">
    <location>
        <begin position="484"/>
        <end position="494"/>
    </location>
</feature>
<feature type="compositionally biased region" description="Polar residues" evidence="3">
    <location>
        <begin position="495"/>
        <end position="505"/>
    </location>
</feature>
<feature type="compositionally biased region" description="Basic and acidic residues" evidence="3">
    <location>
        <begin position="509"/>
        <end position="523"/>
    </location>
</feature>
<feature type="compositionally biased region" description="Basic and acidic residues" evidence="3">
    <location>
        <begin position="586"/>
        <end position="609"/>
    </location>
</feature>
<feature type="active site" description="Proton acceptor" evidence="2">
    <location>
        <position position="255"/>
    </location>
</feature>
<feature type="binding site" evidence="2">
    <location>
        <begin position="137"/>
        <end position="145"/>
    </location>
    <ligand>
        <name>ATP</name>
        <dbReference type="ChEBI" id="CHEBI:30616"/>
    </ligand>
</feature>
<feature type="binding site" evidence="2">
    <location>
        <position position="160"/>
    </location>
    <ligand>
        <name>ATP</name>
        <dbReference type="ChEBI" id="CHEBI:30616"/>
    </ligand>
</feature>
<feature type="lipid moiety-binding region" description="N-myristoyl glycine" evidence="1">
    <location>
        <position position="2"/>
    </location>
</feature>
<feature type="splice variant" id="VSP_059055" description="In isoform 2.">
    <original>GYE</original>
    <variation>VRL</variation>
    <location>
        <begin position="660"/>
        <end position="662"/>
    </location>
</feature>
<feature type="splice variant" id="VSP_059056" description="In isoform 2.">
    <location>
        <begin position="663"/>
        <end position="709"/>
    </location>
</feature>
<reference key="1">
    <citation type="journal article" date="2000" name="Nature">
        <title>Sequence and analysis of chromosome 1 of the plant Arabidopsis thaliana.</title>
        <authorList>
            <person name="Theologis A."/>
            <person name="Ecker J.R."/>
            <person name="Palm C.J."/>
            <person name="Federspiel N.A."/>
            <person name="Kaul S."/>
            <person name="White O."/>
            <person name="Alonso J."/>
            <person name="Altafi H."/>
            <person name="Araujo R."/>
            <person name="Bowman C.L."/>
            <person name="Brooks S.Y."/>
            <person name="Buehler E."/>
            <person name="Chan A."/>
            <person name="Chao Q."/>
            <person name="Chen H."/>
            <person name="Cheuk R.F."/>
            <person name="Chin C.W."/>
            <person name="Chung M.K."/>
            <person name="Conn L."/>
            <person name="Conway A.B."/>
            <person name="Conway A.R."/>
            <person name="Creasy T.H."/>
            <person name="Dewar K."/>
            <person name="Dunn P."/>
            <person name="Etgu P."/>
            <person name="Feldblyum T.V."/>
            <person name="Feng J.-D."/>
            <person name="Fong B."/>
            <person name="Fujii C.Y."/>
            <person name="Gill J.E."/>
            <person name="Goldsmith A.D."/>
            <person name="Haas B."/>
            <person name="Hansen N.F."/>
            <person name="Hughes B."/>
            <person name="Huizar L."/>
            <person name="Hunter J.L."/>
            <person name="Jenkins J."/>
            <person name="Johnson-Hopson C."/>
            <person name="Khan S."/>
            <person name="Khaykin E."/>
            <person name="Kim C.J."/>
            <person name="Koo H.L."/>
            <person name="Kremenetskaia I."/>
            <person name="Kurtz D.B."/>
            <person name="Kwan A."/>
            <person name="Lam B."/>
            <person name="Langin-Hooper S."/>
            <person name="Lee A."/>
            <person name="Lee J.M."/>
            <person name="Lenz C.A."/>
            <person name="Li J.H."/>
            <person name="Li Y.-P."/>
            <person name="Lin X."/>
            <person name="Liu S.X."/>
            <person name="Liu Z.A."/>
            <person name="Luros J.S."/>
            <person name="Maiti R."/>
            <person name="Marziali A."/>
            <person name="Militscher J."/>
            <person name="Miranda M."/>
            <person name="Nguyen M."/>
            <person name="Nierman W.C."/>
            <person name="Osborne B.I."/>
            <person name="Pai G."/>
            <person name="Peterson J."/>
            <person name="Pham P.K."/>
            <person name="Rizzo M."/>
            <person name="Rooney T."/>
            <person name="Rowley D."/>
            <person name="Sakano H."/>
            <person name="Salzberg S.L."/>
            <person name="Schwartz J.R."/>
            <person name="Shinn P."/>
            <person name="Southwick A.M."/>
            <person name="Sun H."/>
            <person name="Tallon L.J."/>
            <person name="Tambunga G."/>
            <person name="Toriumi M.J."/>
            <person name="Town C.D."/>
            <person name="Utterback T."/>
            <person name="Van Aken S."/>
            <person name="Vaysberg M."/>
            <person name="Vysotskaia V.S."/>
            <person name="Walker M."/>
            <person name="Wu D."/>
            <person name="Yu G."/>
            <person name="Fraser C.M."/>
            <person name="Venter J.C."/>
            <person name="Davis R.W."/>
        </authorList>
    </citation>
    <scope>NUCLEOTIDE SEQUENCE [LARGE SCALE GENOMIC DNA]</scope>
    <source>
        <strain>cv. Columbia</strain>
    </source>
</reference>
<reference key="2">
    <citation type="journal article" date="2017" name="Plant J.">
        <title>Araport11: a complete reannotation of the Arabidopsis thaliana reference genome.</title>
        <authorList>
            <person name="Cheng C.Y."/>
            <person name="Krishnakumar V."/>
            <person name="Chan A.P."/>
            <person name="Thibaud-Nissen F."/>
            <person name="Schobel S."/>
            <person name="Town C.D."/>
        </authorList>
    </citation>
    <scope>GENOME REANNOTATION</scope>
    <source>
        <strain>cv. Columbia</strain>
    </source>
</reference>
<reference key="3">
    <citation type="journal article" date="2005" name="Plant Cell">
        <title>Dissecting the beta-aminobutyric acid-induced priming phenomenon in Arabidopsis.</title>
        <authorList>
            <person name="Ton J."/>
            <person name="Jakab G."/>
            <person name="Toquin V."/>
            <person name="Flors V."/>
            <person name="Iavicoli A."/>
            <person name="Maeder M.N."/>
            <person name="Metraux J.-P."/>
            <person name="Mauch-Mani B."/>
        </authorList>
    </citation>
    <scope>FUNCTION</scope>
    <scope>DISRUPTION PHENOTYPE</scope>
    <source>
        <strain>cv. Columbia</strain>
        <strain>cv. Wassilewskija</strain>
    </source>
</reference>
<reference key="4">
    <citation type="journal article" date="2012" name="Plant Physiol.">
        <title>Descendants of primed Arabidopsis plants exhibit resistance to biotic stress.</title>
        <authorList>
            <person name="Slaughter A."/>
            <person name="Daniel X."/>
            <person name="Flors V."/>
            <person name="Luna E."/>
            <person name="Hohn B."/>
            <person name="Mauch-Mani B."/>
        </authorList>
    </citation>
    <scope>FUNCTION</scope>
    <scope>DISRUPTION PHENOTYPE</scope>
    <source>
        <strain>cv. Columbia</strain>
        <strain>cv. Wassilewskija</strain>
    </source>
</reference>
<gene>
    <name evidence="6" type="primary">IBS1</name>
    <name evidence="7" type="ordered locus">At1g18670</name>
    <name evidence="8" type="ORF">F6A14.22</name>
</gene>